<evidence type="ECO:0000250" key="1"/>
<evidence type="ECO:0000250" key="2">
    <source>
        <dbReference type="UniProtKB" id="P01579"/>
    </source>
</evidence>
<evidence type="ECO:0000250" key="3">
    <source>
        <dbReference type="UniProtKB" id="P01580"/>
    </source>
</evidence>
<evidence type="ECO:0000255" key="4"/>
<evidence type="ECO:0000305" key="5"/>
<accession>Q647G2</accession>
<reference key="1">
    <citation type="submission" date="2004-08" db="EMBL/GenBank/DDBJ databases">
        <title>Cloning and expression of gamma interferon gene from musk deer (Moschus berezovskii).</title>
        <authorList>
            <person name="Zou F."/>
            <person name="Liu S."/>
            <person name="Lai B."/>
            <person name="Yue B."/>
        </authorList>
    </citation>
    <scope>NUCLEOTIDE SEQUENCE [MRNA]</scope>
</reference>
<sequence length="166" mass="19477">MKYTSYFLALQLCLLLGFSGSYGQGPFFKEIENLKEYFNASNPDVATGGPLFLEILKNWKEESDKKIIQSQIVSFYFKLFENFKDDQVIQRSMDIIKQDMFQKFLNGSSEKLEDFKKLIQIPVDDLQIQRKAINELIKVMNDLLPKSNLRKRKRSQNLFRGRRAST</sequence>
<protein>
    <recommendedName>
        <fullName>Interferon gamma</fullName>
        <shortName>IFN-gamma</shortName>
    </recommendedName>
</protein>
<gene>
    <name type="primary">IFNG</name>
</gene>
<feature type="signal peptide" evidence="1">
    <location>
        <begin position="1"/>
        <end position="23"/>
    </location>
</feature>
<feature type="chain" id="PRO_0000016452" description="Interferon gamma">
    <location>
        <begin position="24"/>
        <end position="166"/>
    </location>
</feature>
<feature type="modified residue" description="Pyrrolidone carboxylic acid" evidence="2">
    <location>
        <position position="24"/>
    </location>
</feature>
<feature type="glycosylation site" description="N-linked (GlcNAc...) asparagine" evidence="4">
    <location>
        <position position="39"/>
    </location>
</feature>
<feature type="glycosylation site" description="N-linked (GlcNAc...) asparagine" evidence="4">
    <location>
        <position position="106"/>
    </location>
</feature>
<dbReference type="EMBL" id="AY722800">
    <property type="protein sequence ID" value="AAU14169.1"/>
    <property type="molecule type" value="mRNA"/>
</dbReference>
<dbReference type="SMR" id="Q647G2"/>
<dbReference type="GlyCosmos" id="Q647G2">
    <property type="glycosylation" value="2 sites, No reported glycans"/>
</dbReference>
<dbReference type="GO" id="GO:0005615">
    <property type="term" value="C:extracellular space"/>
    <property type="evidence" value="ECO:0007669"/>
    <property type="project" value="UniProtKB-KW"/>
</dbReference>
<dbReference type="GO" id="GO:0005125">
    <property type="term" value="F:cytokine activity"/>
    <property type="evidence" value="ECO:0007669"/>
    <property type="project" value="UniProtKB-KW"/>
</dbReference>
<dbReference type="GO" id="GO:0005133">
    <property type="term" value="F:type II interferon receptor binding"/>
    <property type="evidence" value="ECO:0007669"/>
    <property type="project" value="InterPro"/>
</dbReference>
<dbReference type="GO" id="GO:0002250">
    <property type="term" value="P:adaptive immune response"/>
    <property type="evidence" value="ECO:0007669"/>
    <property type="project" value="TreeGrafter"/>
</dbReference>
<dbReference type="GO" id="GO:0051607">
    <property type="term" value="P:defense response to virus"/>
    <property type="evidence" value="ECO:0007669"/>
    <property type="project" value="UniProtKB-KW"/>
</dbReference>
<dbReference type="GO" id="GO:0006959">
    <property type="term" value="P:humoral immune response"/>
    <property type="evidence" value="ECO:0007669"/>
    <property type="project" value="TreeGrafter"/>
</dbReference>
<dbReference type="FunFam" id="1.20.1250.10:FF:000080">
    <property type="entry name" value="Interferon gamma"/>
    <property type="match status" value="1"/>
</dbReference>
<dbReference type="Gene3D" id="1.20.1250.10">
    <property type="match status" value="1"/>
</dbReference>
<dbReference type="InterPro" id="IPR009079">
    <property type="entry name" value="4_helix_cytokine-like_core"/>
</dbReference>
<dbReference type="InterPro" id="IPR002069">
    <property type="entry name" value="Interferon_gamma"/>
</dbReference>
<dbReference type="PANTHER" id="PTHR11419">
    <property type="entry name" value="INTERFERON GAMMA"/>
    <property type="match status" value="1"/>
</dbReference>
<dbReference type="PANTHER" id="PTHR11419:SF0">
    <property type="entry name" value="INTERFERON GAMMA"/>
    <property type="match status" value="1"/>
</dbReference>
<dbReference type="Pfam" id="PF00714">
    <property type="entry name" value="IFN-gamma"/>
    <property type="match status" value="1"/>
</dbReference>
<dbReference type="PIRSF" id="PIRSF001936">
    <property type="entry name" value="IFN-gamma"/>
    <property type="match status" value="1"/>
</dbReference>
<dbReference type="SUPFAM" id="SSF47266">
    <property type="entry name" value="4-helical cytokines"/>
    <property type="match status" value="1"/>
</dbReference>
<comment type="function">
    <text evidence="2 3">Type II interferon produced by immune cells such as T-cells and NK cells that plays crucial roles in antimicrobial, antiviral, and antitumor responses by activating effector immune cells and enhancing antigen presentation. Primarily signals through the JAK-STAT pathway after interaction with its receptor IFNGR1 to affect gene regulation. Upon IFNG binding, IFNGR1 intracellular domain opens out to allow association of downstream signaling components JAK2, JAK1 and STAT1, leading to STAT1 activation, nuclear translocation and transcription of IFNG-regulated genes. Many of the induced genes are transcription factors such as IRF1 that are able to further drive regulation of a next wave of transcription. Plays a role in class I antigen presentation pathway by inducing a replacement of catalytic proteasome subunits with immunoproteasome subunits. In turn, increases the quantity, quality, and repertoire of peptides for class I MHC loading. Increases the efficiency of peptide generation also by inducing the expression of activator PA28 that associates with the proteasome and alters its proteolytic cleavage preference. Up-regulates as well MHC II complexes on the cell surface by promoting expression of several key molecules such as cathepsins B/CTSB, H/CTSH, and L/CTSL (By similarity). Participates in the regulation of hematopoietic stem cells during development and under homeostatic conditions by affecting their development, quiescence, and differentiation (By similarity).</text>
</comment>
<comment type="subunit">
    <text evidence="2">Homodimer. Interacts with IFNGR1 (via extracellular domain); this interaction promotes IFNGR1 dimerization.</text>
</comment>
<comment type="subcellular location">
    <subcellularLocation>
        <location evidence="2">Secreted</location>
    </subcellularLocation>
</comment>
<comment type="tissue specificity">
    <text>Released primarily from activated T lymphocytes.</text>
</comment>
<comment type="similarity">
    <text evidence="5">Belongs to the type II (or gamma) interferon family.</text>
</comment>
<keyword id="KW-0051">Antiviral defense</keyword>
<keyword id="KW-0202">Cytokine</keyword>
<keyword id="KW-0325">Glycoprotein</keyword>
<keyword id="KW-0341">Growth regulation</keyword>
<keyword id="KW-0873">Pyrrolidone carboxylic acid</keyword>
<keyword id="KW-0964">Secreted</keyword>
<keyword id="KW-0732">Signal</keyword>
<organism>
    <name type="scientific">Moschus berezovskii</name>
    <name type="common">Chinese forest musk deer</name>
    <dbReference type="NCBI Taxonomy" id="68408"/>
    <lineage>
        <taxon>Eukaryota</taxon>
        <taxon>Metazoa</taxon>
        <taxon>Chordata</taxon>
        <taxon>Craniata</taxon>
        <taxon>Vertebrata</taxon>
        <taxon>Euteleostomi</taxon>
        <taxon>Mammalia</taxon>
        <taxon>Eutheria</taxon>
        <taxon>Laurasiatheria</taxon>
        <taxon>Artiodactyla</taxon>
        <taxon>Ruminantia</taxon>
        <taxon>Pecora</taxon>
        <taxon>Moschidae</taxon>
        <taxon>Moschus</taxon>
    </lineage>
</organism>
<proteinExistence type="evidence at transcript level"/>
<name>IFNG_MOSBE</name>